<evidence type="ECO:0000255" key="1">
    <source>
        <dbReference type="HAMAP-Rule" id="MF_00502"/>
    </source>
</evidence>
<evidence type="ECO:0000305" key="2"/>
<keyword id="KW-0687">Ribonucleoprotein</keyword>
<keyword id="KW-0689">Ribosomal protein</keyword>
<feature type="chain" id="PRO_0000173201" description="Large ribosomal subunit protein bL31B">
    <location>
        <begin position="1"/>
        <end position="81"/>
    </location>
</feature>
<sequence>MKAGIHPDYKKVVFMDTNTGFKFLSGSTKGSNETVEWEDGNTYPLLKVEISSDSHPFYTGRQKFATADGRVDRFNKKYGLK</sequence>
<dbReference type="EMBL" id="AE017355">
    <property type="protein sequence ID" value="AAT63956.1"/>
    <property type="molecule type" value="Genomic_DNA"/>
</dbReference>
<dbReference type="RefSeq" id="WP_000643433.1">
    <property type="nucleotide sequence ID" value="NC_005957.1"/>
</dbReference>
<dbReference type="RefSeq" id="YP_039324.1">
    <property type="nucleotide sequence ID" value="NC_005957.1"/>
</dbReference>
<dbReference type="SMR" id="Q6HAV2"/>
<dbReference type="KEGG" id="btk:BT9727_5015"/>
<dbReference type="PATRIC" id="fig|281309.8.peg.5333"/>
<dbReference type="HOGENOM" id="CLU_114306_2_2_9"/>
<dbReference type="Proteomes" id="UP000001301">
    <property type="component" value="Chromosome"/>
</dbReference>
<dbReference type="GO" id="GO:1990904">
    <property type="term" value="C:ribonucleoprotein complex"/>
    <property type="evidence" value="ECO:0007669"/>
    <property type="project" value="UniProtKB-KW"/>
</dbReference>
<dbReference type="GO" id="GO:0005840">
    <property type="term" value="C:ribosome"/>
    <property type="evidence" value="ECO:0007669"/>
    <property type="project" value="UniProtKB-KW"/>
</dbReference>
<dbReference type="GO" id="GO:0003735">
    <property type="term" value="F:structural constituent of ribosome"/>
    <property type="evidence" value="ECO:0007669"/>
    <property type="project" value="InterPro"/>
</dbReference>
<dbReference type="GO" id="GO:0006412">
    <property type="term" value="P:translation"/>
    <property type="evidence" value="ECO:0007669"/>
    <property type="project" value="UniProtKB-UniRule"/>
</dbReference>
<dbReference type="Gene3D" id="4.10.830.30">
    <property type="entry name" value="Ribosomal protein L31"/>
    <property type="match status" value="1"/>
</dbReference>
<dbReference type="HAMAP" id="MF_00502">
    <property type="entry name" value="Ribosomal_bL31_2"/>
    <property type="match status" value="1"/>
</dbReference>
<dbReference type="InterPro" id="IPR034704">
    <property type="entry name" value="Ribosomal_bL28/bL31-like_sf"/>
</dbReference>
<dbReference type="InterPro" id="IPR002150">
    <property type="entry name" value="Ribosomal_bL31"/>
</dbReference>
<dbReference type="InterPro" id="IPR027493">
    <property type="entry name" value="Ribosomal_bL31_B"/>
</dbReference>
<dbReference type="InterPro" id="IPR042105">
    <property type="entry name" value="Ribosomal_bL31_sf"/>
</dbReference>
<dbReference type="NCBIfam" id="TIGR00105">
    <property type="entry name" value="L31"/>
    <property type="match status" value="1"/>
</dbReference>
<dbReference type="NCBIfam" id="NF002462">
    <property type="entry name" value="PRK01678.1"/>
    <property type="match status" value="1"/>
</dbReference>
<dbReference type="PANTHER" id="PTHR33280">
    <property type="entry name" value="50S RIBOSOMAL PROTEIN L31, CHLOROPLASTIC"/>
    <property type="match status" value="1"/>
</dbReference>
<dbReference type="PANTHER" id="PTHR33280:SF1">
    <property type="entry name" value="LARGE RIBOSOMAL SUBUNIT PROTEIN BL31C"/>
    <property type="match status" value="1"/>
</dbReference>
<dbReference type="Pfam" id="PF01197">
    <property type="entry name" value="Ribosomal_L31"/>
    <property type="match status" value="1"/>
</dbReference>
<dbReference type="PRINTS" id="PR01249">
    <property type="entry name" value="RIBOSOMALL31"/>
</dbReference>
<dbReference type="SUPFAM" id="SSF143800">
    <property type="entry name" value="L28p-like"/>
    <property type="match status" value="1"/>
</dbReference>
<dbReference type="PROSITE" id="PS01143">
    <property type="entry name" value="RIBOSOMAL_L31"/>
    <property type="match status" value="1"/>
</dbReference>
<accession>Q6HAV2</accession>
<name>RL31B_BACHK</name>
<comment type="subunit">
    <text evidence="1">Part of the 50S ribosomal subunit.</text>
</comment>
<comment type="similarity">
    <text evidence="1">Belongs to the bacterial ribosomal protein bL31 family. Type B subfamily.</text>
</comment>
<proteinExistence type="inferred from homology"/>
<protein>
    <recommendedName>
        <fullName evidence="1">Large ribosomal subunit protein bL31B</fullName>
    </recommendedName>
    <alternativeName>
        <fullName evidence="2">50S ribosomal protein L31 type B</fullName>
    </alternativeName>
</protein>
<organism>
    <name type="scientific">Bacillus thuringiensis subsp. konkukian (strain 97-27)</name>
    <dbReference type="NCBI Taxonomy" id="281309"/>
    <lineage>
        <taxon>Bacteria</taxon>
        <taxon>Bacillati</taxon>
        <taxon>Bacillota</taxon>
        <taxon>Bacilli</taxon>
        <taxon>Bacillales</taxon>
        <taxon>Bacillaceae</taxon>
        <taxon>Bacillus</taxon>
        <taxon>Bacillus cereus group</taxon>
    </lineage>
</organism>
<gene>
    <name evidence="1" type="primary">rpmE2</name>
    <name type="synonym">rpmE</name>
    <name type="ordered locus">BT9727_5015</name>
</gene>
<reference key="1">
    <citation type="journal article" date="2006" name="J. Bacteriol.">
        <title>Pathogenomic sequence analysis of Bacillus cereus and Bacillus thuringiensis isolates closely related to Bacillus anthracis.</title>
        <authorList>
            <person name="Han C.S."/>
            <person name="Xie G."/>
            <person name="Challacombe J.F."/>
            <person name="Altherr M.R."/>
            <person name="Bhotika S.S."/>
            <person name="Bruce D."/>
            <person name="Campbell C.S."/>
            <person name="Campbell M.L."/>
            <person name="Chen J."/>
            <person name="Chertkov O."/>
            <person name="Cleland C."/>
            <person name="Dimitrijevic M."/>
            <person name="Doggett N.A."/>
            <person name="Fawcett J.J."/>
            <person name="Glavina T."/>
            <person name="Goodwin L.A."/>
            <person name="Hill K.K."/>
            <person name="Hitchcock P."/>
            <person name="Jackson P.J."/>
            <person name="Keim P."/>
            <person name="Kewalramani A.R."/>
            <person name="Longmire J."/>
            <person name="Lucas S."/>
            <person name="Malfatti S."/>
            <person name="McMurry K."/>
            <person name="Meincke L.J."/>
            <person name="Misra M."/>
            <person name="Moseman B.L."/>
            <person name="Mundt M."/>
            <person name="Munk A.C."/>
            <person name="Okinaka R.T."/>
            <person name="Parson-Quintana B."/>
            <person name="Reilly L.P."/>
            <person name="Richardson P."/>
            <person name="Robinson D.L."/>
            <person name="Rubin E."/>
            <person name="Saunders E."/>
            <person name="Tapia R."/>
            <person name="Tesmer J.G."/>
            <person name="Thayer N."/>
            <person name="Thompson L.S."/>
            <person name="Tice H."/>
            <person name="Ticknor L.O."/>
            <person name="Wills P.L."/>
            <person name="Brettin T.S."/>
            <person name="Gilna P."/>
        </authorList>
    </citation>
    <scope>NUCLEOTIDE SEQUENCE [LARGE SCALE GENOMIC DNA]</scope>
    <source>
        <strain>97-27</strain>
    </source>
</reference>